<accession>Q75PQ8</accession>
<name>ORC2_RAT</name>
<gene>
    <name type="primary">Orc2</name>
    <name type="synonym">Orc2l</name>
</gene>
<evidence type="ECO:0000250" key="1"/>
<evidence type="ECO:0000250" key="2">
    <source>
        <dbReference type="UniProtKB" id="Q13416"/>
    </source>
</evidence>
<evidence type="ECO:0000250" key="3">
    <source>
        <dbReference type="UniProtKB" id="Q60862"/>
    </source>
</evidence>
<evidence type="ECO:0000256" key="4">
    <source>
        <dbReference type="SAM" id="MobiDB-lite"/>
    </source>
</evidence>
<evidence type="ECO:0000305" key="5"/>
<evidence type="ECO:0007829" key="6">
    <source>
        <dbReference type="PDB" id="8SIU"/>
    </source>
</evidence>
<evidence type="ECO:0007829" key="7">
    <source>
        <dbReference type="PDB" id="8SIY"/>
    </source>
</evidence>
<proteinExistence type="evidence at protein level"/>
<organism>
    <name type="scientific">Rattus norvegicus</name>
    <name type="common">Rat</name>
    <dbReference type="NCBI Taxonomy" id="10116"/>
    <lineage>
        <taxon>Eukaryota</taxon>
        <taxon>Metazoa</taxon>
        <taxon>Chordata</taxon>
        <taxon>Craniata</taxon>
        <taxon>Vertebrata</taxon>
        <taxon>Euteleostomi</taxon>
        <taxon>Mammalia</taxon>
        <taxon>Eutheria</taxon>
        <taxon>Euarchontoglires</taxon>
        <taxon>Glires</taxon>
        <taxon>Rodentia</taxon>
        <taxon>Myomorpha</taxon>
        <taxon>Muroidea</taxon>
        <taxon>Muridae</taxon>
        <taxon>Murinae</taxon>
        <taxon>Rattus</taxon>
    </lineage>
</organism>
<sequence>MSTLRLKEAKVPSVQFVGDDDVLSHILDREGGTKLKKEKVQLLVNPQKVIKKAECELEKSDLEVLEDQNYVEVLGRNIQESLGNGSAVDGRNKVYSFQHRKHPEEMTKLALELAKTSGKIDPLASNDPKITKNIARKSKGHSSEKAPLENNNKNEFPSIQPHNVRKRLIASRSHCDSESEYSASSSEDDEEVAKDDEEDTNVVRCSKKSQGQNRLLPAPVSKEILPKKRKRDKAGDLVEEYFEAHSSSKVLTSDRTLQKLRRARVDQKTLRNLLSKFVPSFSTEIGQLNQQHERLFDKWILQLRLGFNIVLYGLGSKRDLLEKFRTTMLQDSIHVVINGFFPGISVKSILNSITEDVLSHMGTFQSVLDQRDWIMNRFKEDSSLELFLLIHNLDSQMLRGDNSQQILGQLSSLRNVYLIASIDHLNAPLMWDHAKQSLYNWLWYETTTYSPYTEETSYENSLLVKQSGSLPLSSLIHVLRSLTPNARGIFRLLMKYQLDNQDCPSYIGLSFQDFYQQCREAFLVNSDLTLRAQLTEFRDHKLIRTKKGTDGVEYLLIPVDSGTLADFLEKEEEEES</sequence>
<dbReference type="EMBL" id="AB164704">
    <property type="protein sequence ID" value="BAD12235.1"/>
    <property type="molecule type" value="mRNA"/>
</dbReference>
<dbReference type="RefSeq" id="NP_001012003.1">
    <property type="nucleotide sequence ID" value="NM_001012003.1"/>
</dbReference>
<dbReference type="RefSeq" id="XP_006245018.1">
    <property type="nucleotide sequence ID" value="XM_006244956.5"/>
</dbReference>
<dbReference type="RefSeq" id="XP_017451848.1">
    <property type="nucleotide sequence ID" value="XM_017596359.1"/>
</dbReference>
<dbReference type="RefSeq" id="XP_038939230.1">
    <property type="nucleotide sequence ID" value="XM_039083302.2"/>
</dbReference>
<dbReference type="RefSeq" id="XP_038939231.1">
    <property type="nucleotide sequence ID" value="XM_039083303.2"/>
</dbReference>
<dbReference type="RefSeq" id="XP_038939233.1">
    <property type="nucleotide sequence ID" value="XM_039083305.2"/>
</dbReference>
<dbReference type="PDB" id="8SIU">
    <property type="method" value="X-ray"/>
    <property type="resolution" value="1.80 A"/>
    <property type="chains" value="B=1-100"/>
</dbReference>
<dbReference type="PDB" id="8SIY">
    <property type="method" value="EM"/>
    <property type="resolution" value="2.90 A"/>
    <property type="chains" value="B=1-100"/>
</dbReference>
<dbReference type="PDBsum" id="8SIU"/>
<dbReference type="PDBsum" id="8SIY"/>
<dbReference type="EMDB" id="EMD-40522"/>
<dbReference type="SMR" id="Q75PQ8"/>
<dbReference type="FunCoup" id="Q75PQ8">
    <property type="interactions" value="4589"/>
</dbReference>
<dbReference type="STRING" id="10116.ENSRNOP00000042867"/>
<dbReference type="PhosphoSitePlus" id="Q75PQ8"/>
<dbReference type="PaxDb" id="10116-ENSRNOP00000042867"/>
<dbReference type="Ensembl" id="ENSRNOT00000051843.5">
    <property type="protein sequence ID" value="ENSRNOP00000042867.3"/>
    <property type="gene ID" value="ENSRNOG00000012558.8"/>
</dbReference>
<dbReference type="GeneID" id="301430"/>
<dbReference type="KEGG" id="rno:301430"/>
<dbReference type="UCSC" id="RGD:1311844">
    <property type="organism name" value="rat"/>
</dbReference>
<dbReference type="AGR" id="RGD:1311844"/>
<dbReference type="CTD" id="4999"/>
<dbReference type="RGD" id="1311844">
    <property type="gene designation" value="Orc2"/>
</dbReference>
<dbReference type="eggNOG" id="KOG2928">
    <property type="taxonomic scope" value="Eukaryota"/>
</dbReference>
<dbReference type="GeneTree" id="ENSGT00390000015228"/>
<dbReference type="HOGENOM" id="CLU_018596_3_0_1"/>
<dbReference type="InParanoid" id="Q75PQ8"/>
<dbReference type="OMA" id="AHERYFF"/>
<dbReference type="OrthoDB" id="20198at2759"/>
<dbReference type="PhylomeDB" id="Q75PQ8"/>
<dbReference type="TreeFam" id="TF101092"/>
<dbReference type="Reactome" id="R-RNO-176187">
    <property type="pathway name" value="Activation of ATR in response to replication stress"/>
</dbReference>
<dbReference type="Reactome" id="R-RNO-68616">
    <property type="pathway name" value="Assembly of the ORC complex at the origin of replication"/>
</dbReference>
<dbReference type="Reactome" id="R-RNO-68689">
    <property type="pathway name" value="CDC6 association with the ORC:origin complex"/>
</dbReference>
<dbReference type="Reactome" id="R-RNO-68949">
    <property type="pathway name" value="Orc1 removal from chromatin"/>
</dbReference>
<dbReference type="Reactome" id="R-RNO-68962">
    <property type="pathway name" value="Activation of the pre-replicative complex"/>
</dbReference>
<dbReference type="PRO" id="PR:Q75PQ8"/>
<dbReference type="Proteomes" id="UP000002494">
    <property type="component" value="Chromosome 9"/>
</dbReference>
<dbReference type="Bgee" id="ENSRNOG00000012558">
    <property type="expression patterns" value="Expressed in thymus and 20 other cell types or tissues"/>
</dbReference>
<dbReference type="GO" id="GO:0005813">
    <property type="term" value="C:centrosome"/>
    <property type="evidence" value="ECO:0000266"/>
    <property type="project" value="RGD"/>
</dbReference>
<dbReference type="GO" id="GO:0000785">
    <property type="term" value="C:chromatin"/>
    <property type="evidence" value="ECO:0000266"/>
    <property type="project" value="RGD"/>
</dbReference>
<dbReference type="GO" id="GO:0000781">
    <property type="term" value="C:chromosome, telomeric region"/>
    <property type="evidence" value="ECO:0000266"/>
    <property type="project" value="RGD"/>
</dbReference>
<dbReference type="GO" id="GO:0000792">
    <property type="term" value="C:heterochromatin"/>
    <property type="evidence" value="ECO:0000266"/>
    <property type="project" value="RGD"/>
</dbReference>
<dbReference type="GO" id="GO:0000939">
    <property type="term" value="C:inner kinetochore"/>
    <property type="evidence" value="ECO:0000266"/>
    <property type="project" value="RGD"/>
</dbReference>
<dbReference type="GO" id="GO:0005664">
    <property type="term" value="C:nuclear origin of replication recognition complex"/>
    <property type="evidence" value="ECO:0000266"/>
    <property type="project" value="RGD"/>
</dbReference>
<dbReference type="GO" id="GO:0005654">
    <property type="term" value="C:nucleoplasm"/>
    <property type="evidence" value="ECO:0007669"/>
    <property type="project" value="Ensembl"/>
</dbReference>
<dbReference type="GO" id="GO:0005634">
    <property type="term" value="C:nucleus"/>
    <property type="evidence" value="ECO:0000266"/>
    <property type="project" value="RGD"/>
</dbReference>
<dbReference type="GO" id="GO:0000808">
    <property type="term" value="C:origin recognition complex"/>
    <property type="evidence" value="ECO:0000266"/>
    <property type="project" value="RGD"/>
</dbReference>
<dbReference type="GO" id="GO:0003688">
    <property type="term" value="F:DNA replication origin binding"/>
    <property type="evidence" value="ECO:0000266"/>
    <property type="project" value="RGD"/>
</dbReference>
<dbReference type="GO" id="GO:0006270">
    <property type="term" value="P:DNA replication initiation"/>
    <property type="evidence" value="ECO:0000266"/>
    <property type="project" value="RGD"/>
</dbReference>
<dbReference type="InterPro" id="IPR007220">
    <property type="entry name" value="ORC2"/>
</dbReference>
<dbReference type="InterPro" id="IPR056772">
    <property type="entry name" value="RecA-like_ORC2"/>
</dbReference>
<dbReference type="InterPro" id="IPR056773">
    <property type="entry name" value="WHD_ORC2"/>
</dbReference>
<dbReference type="PANTHER" id="PTHR14052">
    <property type="entry name" value="ORIGIN RECOGNITION COMPLEX SUBUNIT 2"/>
    <property type="match status" value="1"/>
</dbReference>
<dbReference type="PANTHER" id="PTHR14052:SF0">
    <property type="entry name" value="ORIGIN RECOGNITION COMPLEX SUBUNIT 2"/>
    <property type="match status" value="1"/>
</dbReference>
<dbReference type="Pfam" id="PF04084">
    <property type="entry name" value="RecA-like_ORC2"/>
    <property type="match status" value="1"/>
</dbReference>
<dbReference type="Pfam" id="PF24882">
    <property type="entry name" value="WHD_ORC2"/>
    <property type="match status" value="1"/>
</dbReference>
<protein>
    <recommendedName>
        <fullName>Origin recognition complex subunit 2</fullName>
    </recommendedName>
</protein>
<keyword id="KW-0002">3D-structure</keyword>
<keyword id="KW-0235">DNA replication</keyword>
<keyword id="KW-0539">Nucleus</keyword>
<keyword id="KW-0597">Phosphoprotein</keyword>
<keyword id="KW-1185">Reference proteome</keyword>
<feature type="chain" id="PRO_0000329973" description="Origin recognition complex subunit 2">
    <location>
        <begin position="1"/>
        <end position="576"/>
    </location>
</feature>
<feature type="repeat" description="Involved in LRWD1-binding" evidence="1">
    <location>
        <begin position="1"/>
        <end position="100"/>
    </location>
</feature>
<feature type="region of interest" description="Disordered" evidence="4">
    <location>
        <begin position="119"/>
        <end position="218"/>
    </location>
</feature>
<feature type="compositionally biased region" description="Polar residues" evidence="4">
    <location>
        <begin position="149"/>
        <end position="161"/>
    </location>
</feature>
<feature type="compositionally biased region" description="Acidic residues" evidence="4">
    <location>
        <begin position="186"/>
        <end position="200"/>
    </location>
</feature>
<feature type="modified residue" description="Phosphothreonine" evidence="2">
    <location>
        <position position="116"/>
    </location>
</feature>
<feature type="modified residue" description="Phosphoserine" evidence="2">
    <location>
        <position position="246"/>
    </location>
</feature>
<feature type="strand" evidence="6">
    <location>
        <begin position="14"/>
        <end position="16"/>
    </location>
</feature>
<feature type="turn" evidence="6">
    <location>
        <begin position="19"/>
        <end position="21"/>
    </location>
</feature>
<feature type="strand" evidence="7">
    <location>
        <begin position="23"/>
        <end position="25"/>
    </location>
</feature>
<reference key="1">
    <citation type="submission" date="2004-03" db="EMBL/GenBank/DDBJ databases">
        <title>Rat origin recognition complex, subunit 2.</title>
        <authorList>
            <person name="Saitoh Y."/>
            <person name="Tsutsumi K."/>
        </authorList>
    </citation>
    <scope>NUCLEOTIDE SEQUENCE [MRNA]</scope>
</reference>
<comment type="function">
    <text evidence="1">Component of the origin recognition complex (ORC) that binds origins of replication. DNA-binding is ATP-dependent. The specific DNA sequences that define origins of replication have not been identified yet. ORC is required to assemble the pre-replication complex necessary to initiate DNA replication (By similarity). Binds histone H3 and H4 trimethylation marks H3K9me3, H3K20me3 and H4K27me3. Stabilizes LRWD1, by protecting it from ubiquitin-mediated proteasomal degradation. Also stabilizes ORC3 (By similarity).</text>
</comment>
<comment type="subunit">
    <text evidence="2 3">Component of ORC, a complex composed of at least 6 subunits: ORC1, ORC2, ORC3, ORC4, ORC5 and ORC6. ORC is regulated in a cell-cycle dependent manner. It is sequentially assembled at the exit from anaphase of mitosis and disassembled as cells enter S phase (By similarity). Interacts with DBF4 (By similarity). Interacts with MCM10. Interacts with LRWD1 throughout the cell cycle; this interaction, which occurs only with non-ubiquitinated form of LRWD1, prevents LRWD1 ubiquitination and hence stabilizes the protein. Interacts with POLQ (By similarity).</text>
</comment>
<comment type="subcellular location">
    <subcellularLocation>
        <location evidence="1">Nucleus</location>
    </subcellularLocation>
</comment>
<comment type="similarity">
    <text evidence="5">Belongs to the ORC2 family.</text>
</comment>